<comment type="function">
    <text evidence="1">Cleaves the N-terminal amino acid of tripeptides.</text>
</comment>
<comment type="catalytic activity">
    <reaction evidence="1">
        <text>Release of the N-terminal residue from a tripeptide.</text>
        <dbReference type="EC" id="3.4.11.4"/>
    </reaction>
</comment>
<comment type="cofactor">
    <cofactor evidence="1">
        <name>Zn(2+)</name>
        <dbReference type="ChEBI" id="CHEBI:29105"/>
    </cofactor>
    <text evidence="1">Binds 2 Zn(2+) ions per subunit.</text>
</comment>
<comment type="subcellular location">
    <subcellularLocation>
        <location evidence="1">Cytoplasm</location>
    </subcellularLocation>
</comment>
<comment type="similarity">
    <text evidence="1">Belongs to the peptidase M20B family.</text>
</comment>
<accession>B7MJB5</accession>
<sequence>MDKLLERFLNYVSLDTQSKAGVRQVPSTEGQWKLLHLLKEQLEEMGLINVTLSEKGTLMATLPANVPGDIPAIGFISHVDTSPDCSGKNVNPQIVENYRGGDIALGIGDEVLSPVMFPVLHQLLGQTLITTDGKTLLGADDKAGIAEIMTALAVLQQKNIPHGDIRVAFTPDEEVGKGAKHFDVDAFDARWAYTVDGGGVGELEFENFNAASVNIKIVGNNVHPGTAKGVMVNALSLAARIHAEVPADESPEMTEGYEGFYHLASMKGTVERADMHYIIRDFDRKQFEARKRKMMEIAKKVGKGLHPDCYIELVIEDSYYNMREKVVEHPHILDIAQQAMRDCDIEPELKPIRGGTDGAQLSFMGLPCPNLFTGGYNYHGKHEFVTLEGMEKAVQVIVRIAELTAQRK</sequence>
<protein>
    <recommendedName>
        <fullName evidence="1">Peptidase T</fullName>
        <ecNumber evidence="1">3.4.11.4</ecNumber>
    </recommendedName>
    <alternativeName>
        <fullName evidence="1">Aminotripeptidase</fullName>
        <shortName evidence="1">Tripeptidase</shortName>
    </alternativeName>
    <alternativeName>
        <fullName evidence="1">Tripeptide aminopeptidase</fullName>
    </alternativeName>
</protein>
<name>PEPT_ECO45</name>
<dbReference type="EC" id="3.4.11.4" evidence="1"/>
<dbReference type="EMBL" id="CU928161">
    <property type="protein sequence ID" value="CAR02468.1"/>
    <property type="molecule type" value="Genomic_DNA"/>
</dbReference>
<dbReference type="RefSeq" id="WP_000359446.1">
    <property type="nucleotide sequence ID" value="NC_011742.1"/>
</dbReference>
<dbReference type="SMR" id="B7MJB5"/>
<dbReference type="MEROPS" id="M20.003"/>
<dbReference type="GeneID" id="93776283"/>
<dbReference type="KEGG" id="ecz:ECS88_1142"/>
<dbReference type="HOGENOM" id="CLU_053676_0_0_6"/>
<dbReference type="Proteomes" id="UP000000747">
    <property type="component" value="Chromosome"/>
</dbReference>
<dbReference type="GO" id="GO:0005829">
    <property type="term" value="C:cytosol"/>
    <property type="evidence" value="ECO:0007669"/>
    <property type="project" value="TreeGrafter"/>
</dbReference>
<dbReference type="GO" id="GO:0008237">
    <property type="term" value="F:metallopeptidase activity"/>
    <property type="evidence" value="ECO:0007669"/>
    <property type="project" value="UniProtKB-KW"/>
</dbReference>
<dbReference type="GO" id="GO:0045148">
    <property type="term" value="F:tripeptide aminopeptidase activity"/>
    <property type="evidence" value="ECO:0007669"/>
    <property type="project" value="UniProtKB-UniRule"/>
</dbReference>
<dbReference type="GO" id="GO:0008270">
    <property type="term" value="F:zinc ion binding"/>
    <property type="evidence" value="ECO:0007669"/>
    <property type="project" value="UniProtKB-UniRule"/>
</dbReference>
<dbReference type="GO" id="GO:0043171">
    <property type="term" value="P:peptide catabolic process"/>
    <property type="evidence" value="ECO:0007669"/>
    <property type="project" value="UniProtKB-UniRule"/>
</dbReference>
<dbReference type="GO" id="GO:0006508">
    <property type="term" value="P:proteolysis"/>
    <property type="evidence" value="ECO:0007669"/>
    <property type="project" value="UniProtKB-UniRule"/>
</dbReference>
<dbReference type="CDD" id="cd03892">
    <property type="entry name" value="M20_peptT"/>
    <property type="match status" value="1"/>
</dbReference>
<dbReference type="FunFam" id="3.30.70.360:FF:000002">
    <property type="entry name" value="Peptidase T"/>
    <property type="match status" value="1"/>
</dbReference>
<dbReference type="Gene3D" id="3.30.70.360">
    <property type="match status" value="1"/>
</dbReference>
<dbReference type="Gene3D" id="3.40.630.10">
    <property type="entry name" value="Zn peptidases"/>
    <property type="match status" value="1"/>
</dbReference>
<dbReference type="HAMAP" id="MF_00550">
    <property type="entry name" value="Aminopeptidase_M20"/>
    <property type="match status" value="1"/>
</dbReference>
<dbReference type="InterPro" id="IPR001261">
    <property type="entry name" value="ArgE/DapE_CS"/>
</dbReference>
<dbReference type="InterPro" id="IPR036264">
    <property type="entry name" value="Bact_exopeptidase_dim_dom"/>
</dbReference>
<dbReference type="InterPro" id="IPR002933">
    <property type="entry name" value="Peptidase_M20"/>
</dbReference>
<dbReference type="InterPro" id="IPR011650">
    <property type="entry name" value="Peptidase_M20_dimer"/>
</dbReference>
<dbReference type="InterPro" id="IPR010161">
    <property type="entry name" value="Peptidase_M20B"/>
</dbReference>
<dbReference type="NCBIfam" id="TIGR01882">
    <property type="entry name" value="peptidase-T"/>
    <property type="match status" value="1"/>
</dbReference>
<dbReference type="NCBIfam" id="NF003976">
    <property type="entry name" value="PRK05469.1"/>
    <property type="match status" value="1"/>
</dbReference>
<dbReference type="NCBIfam" id="NF009920">
    <property type="entry name" value="PRK13381.1"/>
    <property type="match status" value="1"/>
</dbReference>
<dbReference type="PANTHER" id="PTHR42994">
    <property type="entry name" value="PEPTIDASE T"/>
    <property type="match status" value="1"/>
</dbReference>
<dbReference type="PANTHER" id="PTHR42994:SF1">
    <property type="entry name" value="PEPTIDASE T"/>
    <property type="match status" value="1"/>
</dbReference>
<dbReference type="Pfam" id="PF07687">
    <property type="entry name" value="M20_dimer"/>
    <property type="match status" value="1"/>
</dbReference>
<dbReference type="Pfam" id="PF01546">
    <property type="entry name" value="Peptidase_M20"/>
    <property type="match status" value="1"/>
</dbReference>
<dbReference type="PIRSF" id="PIRSF037215">
    <property type="entry name" value="Peptidase_M20B"/>
    <property type="match status" value="1"/>
</dbReference>
<dbReference type="SUPFAM" id="SSF55031">
    <property type="entry name" value="Bacterial exopeptidase dimerisation domain"/>
    <property type="match status" value="1"/>
</dbReference>
<dbReference type="SUPFAM" id="SSF53187">
    <property type="entry name" value="Zn-dependent exopeptidases"/>
    <property type="match status" value="1"/>
</dbReference>
<dbReference type="PROSITE" id="PS00758">
    <property type="entry name" value="ARGE_DAPE_CPG2_1"/>
    <property type="match status" value="1"/>
</dbReference>
<dbReference type="PROSITE" id="PS00759">
    <property type="entry name" value="ARGE_DAPE_CPG2_2"/>
    <property type="match status" value="1"/>
</dbReference>
<organism>
    <name type="scientific">Escherichia coli O45:K1 (strain S88 / ExPEC)</name>
    <dbReference type="NCBI Taxonomy" id="585035"/>
    <lineage>
        <taxon>Bacteria</taxon>
        <taxon>Pseudomonadati</taxon>
        <taxon>Pseudomonadota</taxon>
        <taxon>Gammaproteobacteria</taxon>
        <taxon>Enterobacterales</taxon>
        <taxon>Enterobacteriaceae</taxon>
        <taxon>Escherichia</taxon>
    </lineage>
</organism>
<feature type="chain" id="PRO_1000129028" description="Peptidase T">
    <location>
        <begin position="1"/>
        <end position="408"/>
    </location>
</feature>
<feature type="active site" evidence="1">
    <location>
        <position position="80"/>
    </location>
</feature>
<feature type="active site" description="Proton acceptor" evidence="1">
    <location>
        <position position="173"/>
    </location>
</feature>
<feature type="binding site" evidence="1">
    <location>
        <position position="78"/>
    </location>
    <ligand>
        <name>Zn(2+)</name>
        <dbReference type="ChEBI" id="CHEBI:29105"/>
        <label>1</label>
    </ligand>
</feature>
<feature type="binding site" evidence="1">
    <location>
        <position position="140"/>
    </location>
    <ligand>
        <name>Zn(2+)</name>
        <dbReference type="ChEBI" id="CHEBI:29105"/>
        <label>1</label>
    </ligand>
</feature>
<feature type="binding site" evidence="1">
    <location>
        <position position="140"/>
    </location>
    <ligand>
        <name>Zn(2+)</name>
        <dbReference type="ChEBI" id="CHEBI:29105"/>
        <label>2</label>
    </ligand>
</feature>
<feature type="binding site" evidence="1">
    <location>
        <position position="174"/>
    </location>
    <ligand>
        <name>Zn(2+)</name>
        <dbReference type="ChEBI" id="CHEBI:29105"/>
        <label>2</label>
    </ligand>
</feature>
<feature type="binding site" evidence="1">
    <location>
        <position position="196"/>
    </location>
    <ligand>
        <name>Zn(2+)</name>
        <dbReference type="ChEBI" id="CHEBI:29105"/>
        <label>1</label>
    </ligand>
</feature>
<feature type="binding site" evidence="1">
    <location>
        <position position="379"/>
    </location>
    <ligand>
        <name>Zn(2+)</name>
        <dbReference type="ChEBI" id="CHEBI:29105"/>
        <label>2</label>
    </ligand>
</feature>
<gene>
    <name evidence="1" type="primary">pepT</name>
    <name type="ordered locus">ECS88_1142</name>
</gene>
<evidence type="ECO:0000255" key="1">
    <source>
        <dbReference type="HAMAP-Rule" id="MF_00550"/>
    </source>
</evidence>
<proteinExistence type="inferred from homology"/>
<keyword id="KW-0031">Aminopeptidase</keyword>
<keyword id="KW-0963">Cytoplasm</keyword>
<keyword id="KW-0378">Hydrolase</keyword>
<keyword id="KW-0479">Metal-binding</keyword>
<keyword id="KW-0482">Metalloprotease</keyword>
<keyword id="KW-0645">Protease</keyword>
<keyword id="KW-1185">Reference proteome</keyword>
<keyword id="KW-0862">Zinc</keyword>
<reference key="1">
    <citation type="journal article" date="2009" name="PLoS Genet.">
        <title>Organised genome dynamics in the Escherichia coli species results in highly diverse adaptive paths.</title>
        <authorList>
            <person name="Touchon M."/>
            <person name="Hoede C."/>
            <person name="Tenaillon O."/>
            <person name="Barbe V."/>
            <person name="Baeriswyl S."/>
            <person name="Bidet P."/>
            <person name="Bingen E."/>
            <person name="Bonacorsi S."/>
            <person name="Bouchier C."/>
            <person name="Bouvet O."/>
            <person name="Calteau A."/>
            <person name="Chiapello H."/>
            <person name="Clermont O."/>
            <person name="Cruveiller S."/>
            <person name="Danchin A."/>
            <person name="Diard M."/>
            <person name="Dossat C."/>
            <person name="Karoui M.E."/>
            <person name="Frapy E."/>
            <person name="Garry L."/>
            <person name="Ghigo J.M."/>
            <person name="Gilles A.M."/>
            <person name="Johnson J."/>
            <person name="Le Bouguenec C."/>
            <person name="Lescat M."/>
            <person name="Mangenot S."/>
            <person name="Martinez-Jehanne V."/>
            <person name="Matic I."/>
            <person name="Nassif X."/>
            <person name="Oztas S."/>
            <person name="Petit M.A."/>
            <person name="Pichon C."/>
            <person name="Rouy Z."/>
            <person name="Ruf C.S."/>
            <person name="Schneider D."/>
            <person name="Tourret J."/>
            <person name="Vacherie B."/>
            <person name="Vallenet D."/>
            <person name="Medigue C."/>
            <person name="Rocha E.P.C."/>
            <person name="Denamur E."/>
        </authorList>
    </citation>
    <scope>NUCLEOTIDE SEQUENCE [LARGE SCALE GENOMIC DNA]</scope>
    <source>
        <strain>S88 / ExPEC</strain>
    </source>
</reference>